<accession>A4WUQ5</accession>
<protein>
    <recommendedName>
        <fullName evidence="1">UPF0173 metal-dependent hydrolase Rsph17025_2229</fullName>
    </recommendedName>
</protein>
<feature type="chain" id="PRO_0000367208" description="UPF0173 metal-dependent hydrolase Rsph17025_2229">
    <location>
        <begin position="1"/>
        <end position="230"/>
    </location>
</feature>
<gene>
    <name type="ordered locus">Rsph17025_2229</name>
</gene>
<name>Y2229_CERS5</name>
<evidence type="ECO:0000255" key="1">
    <source>
        <dbReference type="HAMAP-Rule" id="MF_00457"/>
    </source>
</evidence>
<keyword id="KW-0378">Hydrolase</keyword>
<proteinExistence type="inferred from homology"/>
<reference key="1">
    <citation type="submission" date="2007-04" db="EMBL/GenBank/DDBJ databases">
        <title>Complete sequence of chromosome of Rhodobacter sphaeroides ATCC 17025.</title>
        <authorList>
            <consortium name="US DOE Joint Genome Institute"/>
            <person name="Copeland A."/>
            <person name="Lucas S."/>
            <person name="Lapidus A."/>
            <person name="Barry K."/>
            <person name="Detter J.C."/>
            <person name="Glavina del Rio T."/>
            <person name="Hammon N."/>
            <person name="Israni S."/>
            <person name="Dalin E."/>
            <person name="Tice H."/>
            <person name="Pitluck S."/>
            <person name="Chertkov O."/>
            <person name="Brettin T."/>
            <person name="Bruce D."/>
            <person name="Han C."/>
            <person name="Schmutz J."/>
            <person name="Larimer F."/>
            <person name="Land M."/>
            <person name="Hauser L."/>
            <person name="Kyrpides N."/>
            <person name="Kim E."/>
            <person name="Richardson P."/>
            <person name="Mackenzie C."/>
            <person name="Choudhary M."/>
            <person name="Donohue T.J."/>
            <person name="Kaplan S."/>
        </authorList>
    </citation>
    <scope>NUCLEOTIDE SEQUENCE [LARGE SCALE GENOMIC DNA]</scope>
    <source>
        <strain>ATCC 17025 / ATH 2.4.3</strain>
    </source>
</reference>
<organism>
    <name type="scientific">Cereibacter sphaeroides (strain ATCC 17025 / ATH 2.4.3)</name>
    <name type="common">Rhodobacter sphaeroides</name>
    <dbReference type="NCBI Taxonomy" id="349102"/>
    <lineage>
        <taxon>Bacteria</taxon>
        <taxon>Pseudomonadati</taxon>
        <taxon>Pseudomonadota</taxon>
        <taxon>Alphaproteobacteria</taxon>
        <taxon>Rhodobacterales</taxon>
        <taxon>Paracoccaceae</taxon>
        <taxon>Cereibacter</taxon>
    </lineage>
</organism>
<sequence length="230" mass="24890">MKITWLGHSGFRIEIEEAVLLVDPWLSGNPMFPIERRDEAIAGATHILLTHGHGDHSGDAVAIASELGLPIVGIYDLVTWLQSRDGVDGIGFNKGGTVTLDGARVTMVHATHSSSIMGEAGPVYTGTESGYMIAGEGHVIYASGDTDIMADMGWMGEYHRPDIGILAAGGHFTMDMKRAAFAARKYFDFRTVIPCHYRTFPLLEQSAEALRQGLPGVEVLEPEVLEPITI</sequence>
<comment type="similarity">
    <text evidence="1">Belongs to the UPF0173 family.</text>
</comment>
<dbReference type="EMBL" id="CP000661">
    <property type="protein sequence ID" value="ABP71119.1"/>
    <property type="molecule type" value="Genomic_DNA"/>
</dbReference>
<dbReference type="SMR" id="A4WUQ5"/>
<dbReference type="STRING" id="349102.Rsph17025_2229"/>
<dbReference type="KEGG" id="rsq:Rsph17025_2229"/>
<dbReference type="eggNOG" id="COG2220">
    <property type="taxonomic scope" value="Bacteria"/>
</dbReference>
<dbReference type="HOGENOM" id="CLU_070010_4_0_5"/>
<dbReference type="BioCyc" id="RSPH349102:G1G8M-2298-MONOMER"/>
<dbReference type="GO" id="GO:0016787">
    <property type="term" value="F:hydrolase activity"/>
    <property type="evidence" value="ECO:0007669"/>
    <property type="project" value="UniProtKB-UniRule"/>
</dbReference>
<dbReference type="Gene3D" id="3.60.15.10">
    <property type="entry name" value="Ribonuclease Z/Hydroxyacylglutathione hydrolase-like"/>
    <property type="match status" value="1"/>
</dbReference>
<dbReference type="HAMAP" id="MF_00457">
    <property type="entry name" value="UPF0173"/>
    <property type="match status" value="1"/>
</dbReference>
<dbReference type="InterPro" id="IPR001279">
    <property type="entry name" value="Metallo-B-lactamas"/>
</dbReference>
<dbReference type="InterPro" id="IPR036866">
    <property type="entry name" value="RibonucZ/Hydroxyglut_hydro"/>
</dbReference>
<dbReference type="InterPro" id="IPR022877">
    <property type="entry name" value="UPF0173"/>
</dbReference>
<dbReference type="InterPro" id="IPR050114">
    <property type="entry name" value="UPF0173_UPF0282_UlaG_hydrolase"/>
</dbReference>
<dbReference type="NCBIfam" id="NF001911">
    <property type="entry name" value="PRK00685.1"/>
    <property type="match status" value="1"/>
</dbReference>
<dbReference type="PANTHER" id="PTHR43546:SF3">
    <property type="entry name" value="UPF0173 METAL-DEPENDENT HYDROLASE MJ1163"/>
    <property type="match status" value="1"/>
</dbReference>
<dbReference type="PANTHER" id="PTHR43546">
    <property type="entry name" value="UPF0173 METAL-DEPENDENT HYDROLASE MJ1163-RELATED"/>
    <property type="match status" value="1"/>
</dbReference>
<dbReference type="Pfam" id="PF12706">
    <property type="entry name" value="Lactamase_B_2"/>
    <property type="match status" value="1"/>
</dbReference>
<dbReference type="SMART" id="SM00849">
    <property type="entry name" value="Lactamase_B"/>
    <property type="match status" value="1"/>
</dbReference>
<dbReference type="SUPFAM" id="SSF56281">
    <property type="entry name" value="Metallo-hydrolase/oxidoreductase"/>
    <property type="match status" value="1"/>
</dbReference>